<dbReference type="EMBL" id="CP000783">
    <property type="protein sequence ID" value="ABU77629.1"/>
    <property type="status" value="ALT_INIT"/>
    <property type="molecule type" value="Genomic_DNA"/>
</dbReference>
<dbReference type="RefSeq" id="WP_004385415.1">
    <property type="nucleotide sequence ID" value="NC_009778.1"/>
</dbReference>
<dbReference type="SMR" id="A7ME45"/>
<dbReference type="GeneID" id="92213611"/>
<dbReference type="KEGG" id="esa:ESA_02383"/>
<dbReference type="HOGENOM" id="CLU_123865_1_0_6"/>
<dbReference type="Proteomes" id="UP000000260">
    <property type="component" value="Chromosome"/>
</dbReference>
<dbReference type="GO" id="GO:0005737">
    <property type="term" value="C:cytoplasm"/>
    <property type="evidence" value="ECO:0007669"/>
    <property type="project" value="UniProtKB-SubCell"/>
</dbReference>
<dbReference type="GO" id="GO:0003677">
    <property type="term" value="F:DNA binding"/>
    <property type="evidence" value="ECO:0007669"/>
    <property type="project" value="InterPro"/>
</dbReference>
<dbReference type="GO" id="GO:0009408">
    <property type="term" value="P:response to heat"/>
    <property type="evidence" value="ECO:0007669"/>
    <property type="project" value="UniProtKB-UniRule"/>
</dbReference>
<dbReference type="Gene3D" id="2.30.30.390">
    <property type="entry name" value="Hemimethylated DNA-binding domain"/>
    <property type="match status" value="1"/>
</dbReference>
<dbReference type="HAMAP" id="MF_01194">
    <property type="entry name" value="HspQ"/>
    <property type="match status" value="1"/>
</dbReference>
<dbReference type="InterPro" id="IPR011722">
    <property type="entry name" value="Hemimethylated_DNA-bd_dom"/>
</dbReference>
<dbReference type="InterPro" id="IPR036623">
    <property type="entry name" value="Hemimethylated_DNA-bd_sf"/>
</dbReference>
<dbReference type="InterPro" id="IPR022866">
    <property type="entry name" value="HspQ"/>
</dbReference>
<dbReference type="NCBIfam" id="NF010729">
    <property type="entry name" value="PRK14129.1"/>
    <property type="match status" value="1"/>
</dbReference>
<dbReference type="NCBIfam" id="TIGR02097">
    <property type="entry name" value="yccV"/>
    <property type="match status" value="1"/>
</dbReference>
<dbReference type="Pfam" id="PF08755">
    <property type="entry name" value="YccV-like"/>
    <property type="match status" value="1"/>
</dbReference>
<dbReference type="SMART" id="SM00992">
    <property type="entry name" value="YccV-like"/>
    <property type="match status" value="1"/>
</dbReference>
<dbReference type="SUPFAM" id="SSF141255">
    <property type="entry name" value="YccV-like"/>
    <property type="match status" value="1"/>
</dbReference>
<gene>
    <name evidence="1" type="primary">hspQ</name>
    <name type="ordered locus">ESA_02383</name>
</gene>
<feature type="chain" id="PRO_0000315302" description="Heat shock protein HspQ">
    <location>
        <begin position="1"/>
        <end position="105"/>
    </location>
</feature>
<feature type="region of interest" description="Disordered" evidence="2">
    <location>
        <begin position="75"/>
        <end position="105"/>
    </location>
</feature>
<sequence length="105" mass="11869">MIASKFGIGQQVRHSLLGYLGVVVDIDPEYSLDEPEVDELAVNAELRAAPWYHVVMEDDDGQPVHTYLAEAQLSGEMQEEHPEQPSMDELARSIRQQLQAPRLRN</sequence>
<organism>
    <name type="scientific">Cronobacter sakazakii (strain ATCC BAA-894)</name>
    <name type="common">Enterobacter sakazakii</name>
    <dbReference type="NCBI Taxonomy" id="290339"/>
    <lineage>
        <taxon>Bacteria</taxon>
        <taxon>Pseudomonadati</taxon>
        <taxon>Pseudomonadota</taxon>
        <taxon>Gammaproteobacteria</taxon>
        <taxon>Enterobacterales</taxon>
        <taxon>Enterobacteriaceae</taxon>
        <taxon>Cronobacter</taxon>
    </lineage>
</organism>
<name>HSPQ_CROS8</name>
<keyword id="KW-0963">Cytoplasm</keyword>
<keyword id="KW-1185">Reference proteome</keyword>
<keyword id="KW-0346">Stress response</keyword>
<accession>A7ME45</accession>
<proteinExistence type="inferred from homology"/>
<evidence type="ECO:0000255" key="1">
    <source>
        <dbReference type="HAMAP-Rule" id="MF_01194"/>
    </source>
</evidence>
<evidence type="ECO:0000256" key="2">
    <source>
        <dbReference type="SAM" id="MobiDB-lite"/>
    </source>
</evidence>
<evidence type="ECO:0000305" key="3"/>
<reference key="1">
    <citation type="journal article" date="2010" name="PLoS ONE">
        <title>Genome sequence of Cronobacter sakazakii BAA-894 and comparative genomic hybridization analysis with other Cronobacter species.</title>
        <authorList>
            <person name="Kucerova E."/>
            <person name="Clifton S.W."/>
            <person name="Xia X.Q."/>
            <person name="Long F."/>
            <person name="Porwollik S."/>
            <person name="Fulton L."/>
            <person name="Fronick C."/>
            <person name="Minx P."/>
            <person name="Kyung K."/>
            <person name="Warren W."/>
            <person name="Fulton R."/>
            <person name="Feng D."/>
            <person name="Wollam A."/>
            <person name="Shah N."/>
            <person name="Bhonagiri V."/>
            <person name="Nash W.E."/>
            <person name="Hallsworth-Pepin K."/>
            <person name="Wilson R.K."/>
            <person name="McClelland M."/>
            <person name="Forsythe S.J."/>
        </authorList>
    </citation>
    <scope>NUCLEOTIDE SEQUENCE [LARGE SCALE GENOMIC DNA]</scope>
    <source>
        <strain>ATCC BAA-894</strain>
    </source>
</reference>
<comment type="function">
    <text evidence="1">Involved in the degradation of certain denaturated proteins, including DnaA, during heat shock stress.</text>
</comment>
<comment type="subcellular location">
    <subcellularLocation>
        <location evidence="1">Cytoplasm</location>
    </subcellularLocation>
</comment>
<comment type="similarity">
    <text evidence="1">Belongs to the HspQ family.</text>
</comment>
<comment type="sequence caution" evidence="3">
    <conflict type="erroneous initiation">
        <sequence resource="EMBL-CDS" id="ABU77629"/>
    </conflict>
</comment>
<protein>
    <recommendedName>
        <fullName evidence="1">Heat shock protein HspQ</fullName>
    </recommendedName>
</protein>